<reference key="1">
    <citation type="journal article" date="1998" name="Biochem. Biophys. Res. Commun.">
        <title>Cloning of a putative human neurotransmitter receptor expressed in skeletal muscle and brain.</title>
        <authorList>
            <person name="Zeng Z."/>
            <person name="Fan P."/>
            <person name="Rand E."/>
            <person name="Kyaw H."/>
            <person name="Su K."/>
            <person name="Madike V."/>
            <person name="Carter K.C."/>
            <person name="Li Y."/>
        </authorList>
    </citation>
    <scope>NUCLEOTIDE SEQUENCE [MRNA]</scope>
    <scope>TISSUE SPECIFICITY</scope>
</reference>
<reference key="2">
    <citation type="journal article" date="2005" name="Genomics">
        <title>Trace amine-associated receptors form structurally and functionally distinct subfamilies of novel G protein-coupled receptors.</title>
        <authorList>
            <person name="Lindemann L."/>
            <person name="Ebeling M."/>
            <person name="Kratochwil N.A."/>
            <person name="Bunzow J.R."/>
            <person name="Grandy D.K."/>
            <person name="Hoener M.C."/>
        </authorList>
    </citation>
    <scope>NUCLEOTIDE SEQUENCE [GENOMIC DNA]</scope>
</reference>
<reference key="3">
    <citation type="journal article" date="2010" name="PLoS ONE">
        <title>Structural and functional evolution of the trace amine-associated receptors TAAR3, TAAR4 and TAAR5 in primates.</title>
        <authorList>
            <person name="Staubert C."/>
            <person name="Boselt I."/>
            <person name="Bohnekamp J."/>
            <person name="Rompler H."/>
            <person name="Enard W."/>
            <person name="Schoneberg T."/>
        </authorList>
    </citation>
    <scope>NUCLEOTIDE SEQUENCE [GENOMIC DNA]</scope>
</reference>
<reference key="4">
    <citation type="journal article" date="2003" name="Nature">
        <title>The DNA sequence and analysis of human chromosome 6.</title>
        <authorList>
            <person name="Mungall A.J."/>
            <person name="Palmer S.A."/>
            <person name="Sims S.K."/>
            <person name="Edwards C.A."/>
            <person name="Ashurst J.L."/>
            <person name="Wilming L."/>
            <person name="Jones M.C."/>
            <person name="Horton R."/>
            <person name="Hunt S.E."/>
            <person name="Scott C.E."/>
            <person name="Gilbert J.G.R."/>
            <person name="Clamp M.E."/>
            <person name="Bethel G."/>
            <person name="Milne S."/>
            <person name="Ainscough R."/>
            <person name="Almeida J.P."/>
            <person name="Ambrose K.D."/>
            <person name="Andrews T.D."/>
            <person name="Ashwell R.I.S."/>
            <person name="Babbage A.K."/>
            <person name="Bagguley C.L."/>
            <person name="Bailey J."/>
            <person name="Banerjee R."/>
            <person name="Barker D.J."/>
            <person name="Barlow K.F."/>
            <person name="Bates K."/>
            <person name="Beare D.M."/>
            <person name="Beasley H."/>
            <person name="Beasley O."/>
            <person name="Bird C.P."/>
            <person name="Blakey S.E."/>
            <person name="Bray-Allen S."/>
            <person name="Brook J."/>
            <person name="Brown A.J."/>
            <person name="Brown J.Y."/>
            <person name="Burford D.C."/>
            <person name="Burrill W."/>
            <person name="Burton J."/>
            <person name="Carder C."/>
            <person name="Carter N.P."/>
            <person name="Chapman J.C."/>
            <person name="Clark S.Y."/>
            <person name="Clark G."/>
            <person name="Clee C.M."/>
            <person name="Clegg S."/>
            <person name="Cobley V."/>
            <person name="Collier R.E."/>
            <person name="Collins J.E."/>
            <person name="Colman L.K."/>
            <person name="Corby N.R."/>
            <person name="Coville G.J."/>
            <person name="Culley K.M."/>
            <person name="Dhami P."/>
            <person name="Davies J."/>
            <person name="Dunn M."/>
            <person name="Earthrowl M.E."/>
            <person name="Ellington A.E."/>
            <person name="Evans K.A."/>
            <person name="Faulkner L."/>
            <person name="Francis M.D."/>
            <person name="Frankish A."/>
            <person name="Frankland J."/>
            <person name="French L."/>
            <person name="Garner P."/>
            <person name="Garnett J."/>
            <person name="Ghori M.J."/>
            <person name="Gilby L.M."/>
            <person name="Gillson C.J."/>
            <person name="Glithero R.J."/>
            <person name="Grafham D.V."/>
            <person name="Grant M."/>
            <person name="Gribble S."/>
            <person name="Griffiths C."/>
            <person name="Griffiths M.N.D."/>
            <person name="Hall R."/>
            <person name="Halls K.S."/>
            <person name="Hammond S."/>
            <person name="Harley J.L."/>
            <person name="Hart E.A."/>
            <person name="Heath P.D."/>
            <person name="Heathcott R."/>
            <person name="Holmes S.J."/>
            <person name="Howden P.J."/>
            <person name="Howe K.L."/>
            <person name="Howell G.R."/>
            <person name="Huckle E."/>
            <person name="Humphray S.J."/>
            <person name="Humphries M.D."/>
            <person name="Hunt A.R."/>
            <person name="Johnson C.M."/>
            <person name="Joy A.A."/>
            <person name="Kay M."/>
            <person name="Keenan S.J."/>
            <person name="Kimberley A.M."/>
            <person name="King A."/>
            <person name="Laird G.K."/>
            <person name="Langford C."/>
            <person name="Lawlor S."/>
            <person name="Leongamornlert D.A."/>
            <person name="Leversha M."/>
            <person name="Lloyd C.R."/>
            <person name="Lloyd D.M."/>
            <person name="Loveland J.E."/>
            <person name="Lovell J."/>
            <person name="Martin S."/>
            <person name="Mashreghi-Mohammadi M."/>
            <person name="Maslen G.L."/>
            <person name="Matthews L."/>
            <person name="McCann O.T."/>
            <person name="McLaren S.J."/>
            <person name="McLay K."/>
            <person name="McMurray A."/>
            <person name="Moore M.J.F."/>
            <person name="Mullikin J.C."/>
            <person name="Niblett D."/>
            <person name="Nickerson T."/>
            <person name="Novik K.L."/>
            <person name="Oliver K."/>
            <person name="Overton-Larty E.K."/>
            <person name="Parker A."/>
            <person name="Patel R."/>
            <person name="Pearce A.V."/>
            <person name="Peck A.I."/>
            <person name="Phillimore B.J.C.T."/>
            <person name="Phillips S."/>
            <person name="Plumb R.W."/>
            <person name="Porter K.M."/>
            <person name="Ramsey Y."/>
            <person name="Ranby S.A."/>
            <person name="Rice C.M."/>
            <person name="Ross M.T."/>
            <person name="Searle S.M."/>
            <person name="Sehra H.K."/>
            <person name="Sheridan E."/>
            <person name="Skuce C.D."/>
            <person name="Smith S."/>
            <person name="Smith M."/>
            <person name="Spraggon L."/>
            <person name="Squares S.L."/>
            <person name="Steward C.A."/>
            <person name="Sycamore N."/>
            <person name="Tamlyn-Hall G."/>
            <person name="Tester J."/>
            <person name="Theaker A.J."/>
            <person name="Thomas D.W."/>
            <person name="Thorpe A."/>
            <person name="Tracey A."/>
            <person name="Tromans A."/>
            <person name="Tubby B."/>
            <person name="Wall M."/>
            <person name="Wallis J.M."/>
            <person name="West A.P."/>
            <person name="White S.S."/>
            <person name="Whitehead S.L."/>
            <person name="Whittaker H."/>
            <person name="Wild A."/>
            <person name="Willey D.J."/>
            <person name="Wilmer T.E."/>
            <person name="Wood J.M."/>
            <person name="Wray P.W."/>
            <person name="Wyatt J.C."/>
            <person name="Young L."/>
            <person name="Younger R.M."/>
            <person name="Bentley D.R."/>
            <person name="Coulson A."/>
            <person name="Durbin R.M."/>
            <person name="Hubbard T."/>
            <person name="Sulston J.E."/>
            <person name="Dunham I."/>
            <person name="Rogers J."/>
            <person name="Beck S."/>
        </authorList>
    </citation>
    <scope>NUCLEOTIDE SEQUENCE [LARGE SCALE GENOMIC DNA]</scope>
</reference>
<reference key="5">
    <citation type="submission" date="2005-09" db="EMBL/GenBank/DDBJ databases">
        <authorList>
            <person name="Mural R.J."/>
            <person name="Istrail S."/>
            <person name="Sutton G."/>
            <person name="Florea L."/>
            <person name="Halpern A.L."/>
            <person name="Mobarry C.M."/>
            <person name="Lippert R."/>
            <person name="Walenz B."/>
            <person name="Shatkay H."/>
            <person name="Dew I."/>
            <person name="Miller J.R."/>
            <person name="Flanigan M.J."/>
            <person name="Edwards N.J."/>
            <person name="Bolanos R."/>
            <person name="Fasulo D."/>
            <person name="Halldorsson B.V."/>
            <person name="Hannenhalli S."/>
            <person name="Turner R."/>
            <person name="Yooseph S."/>
            <person name="Lu F."/>
            <person name="Nusskern D.R."/>
            <person name="Shue B.C."/>
            <person name="Zheng X.H."/>
            <person name="Zhong F."/>
            <person name="Delcher A.L."/>
            <person name="Huson D.H."/>
            <person name="Kravitz S.A."/>
            <person name="Mouchard L."/>
            <person name="Reinert K."/>
            <person name="Remington K.A."/>
            <person name="Clark A.G."/>
            <person name="Waterman M.S."/>
            <person name="Eichler E.E."/>
            <person name="Adams M.D."/>
            <person name="Hunkapiller M.W."/>
            <person name="Myers E.W."/>
            <person name="Venter J.C."/>
        </authorList>
    </citation>
    <scope>NUCLEOTIDE SEQUENCE [LARGE SCALE GENOMIC DNA]</scope>
</reference>
<reference key="6">
    <citation type="journal article" date="2004" name="Genome Res.">
        <title>The status, quality, and expansion of the NIH full-length cDNA project: the Mammalian Gene Collection (MGC).</title>
        <authorList>
            <consortium name="The MGC Project Team"/>
        </authorList>
    </citation>
    <scope>NUCLEOTIDE SEQUENCE [LARGE SCALE MRNA]</scope>
</reference>
<reference key="7">
    <citation type="journal article" date="2013" name="PLoS ONE">
        <title>Human trace amine-associated receptor TAAR5 can be activated by trimethylamine.</title>
        <authorList>
            <person name="Wallrabenstein I."/>
            <person name="Kuklan J."/>
            <person name="Weber L."/>
            <person name="Zborala S."/>
            <person name="Werner M."/>
            <person name="Altmuller J."/>
            <person name="Becker C."/>
            <person name="Schmidt A."/>
            <person name="Hatt H."/>
            <person name="Hummel T."/>
            <person name="Gisselmann G."/>
        </authorList>
    </citation>
    <scope>FUNCTION</scope>
    <scope>SUBCELLULAR LOCATION</scope>
</reference>
<reference key="8">
    <citation type="journal article" date="2023" name="Nature">
        <title>Structural basis of amine odorant perception by a mammal olfactory receptor.</title>
        <authorList>
            <person name="Guo L."/>
            <person name="Cheng J."/>
            <person name="Lian S."/>
            <person name="Liu Q."/>
            <person name="Lu Y."/>
            <person name="Zheng Y."/>
            <person name="Zhu K."/>
            <person name="Zhang M."/>
            <person name="Kong Y."/>
            <person name="Zhang C."/>
            <person name="Rong N."/>
            <person name="Zhuang Y."/>
            <person name="Fang G."/>
            <person name="Jiang J."/>
            <person name="Zhang T."/>
            <person name="Han X."/>
            <person name="Liu Z."/>
            <person name="Xia M."/>
            <person name="Liu S."/>
            <person name="Zhang L."/>
            <person name="Liberles S.D."/>
            <person name="Yu X."/>
            <person name="Xu Y."/>
            <person name="Yang F."/>
            <person name="Li Q."/>
            <person name="Sun J.P."/>
        </authorList>
    </citation>
    <scope>SUBCELLULAR LOCATION</scope>
</reference>
<feature type="chain" id="PRO_0000070154" description="Trace amine-associated receptor 5">
    <location>
        <begin position="1"/>
        <end position="337"/>
    </location>
</feature>
<feature type="topological domain" description="Extracellular" evidence="3">
    <location>
        <begin position="1"/>
        <end position="34"/>
    </location>
</feature>
<feature type="transmembrane region" description="Helical; Name=1" evidence="3">
    <location>
        <begin position="35"/>
        <end position="55"/>
    </location>
</feature>
<feature type="topological domain" description="Cytoplasmic" evidence="3">
    <location>
        <begin position="56"/>
        <end position="70"/>
    </location>
</feature>
<feature type="transmembrane region" description="Helical; Name=2" evidence="3">
    <location>
        <begin position="71"/>
        <end position="91"/>
    </location>
</feature>
<feature type="topological domain" description="Extracellular" evidence="3">
    <location>
        <begin position="92"/>
        <end position="109"/>
    </location>
</feature>
<feature type="transmembrane region" description="Helical; Name=3" evidence="3">
    <location>
        <begin position="110"/>
        <end position="130"/>
    </location>
</feature>
<feature type="topological domain" description="Cytoplasmic" evidence="3">
    <location>
        <begin position="131"/>
        <end position="154"/>
    </location>
</feature>
<feature type="transmembrane region" description="Helical; Name=4" evidence="3">
    <location>
        <begin position="155"/>
        <end position="175"/>
    </location>
</feature>
<feature type="topological domain" description="Extracellular" evidence="3">
    <location>
        <begin position="176"/>
        <end position="204"/>
    </location>
</feature>
<feature type="transmembrane region" description="Helical; Name=5" evidence="3">
    <location>
        <begin position="205"/>
        <end position="225"/>
    </location>
</feature>
<feature type="topological domain" description="Cytoplasmic" evidence="3">
    <location>
        <begin position="226"/>
        <end position="253"/>
    </location>
</feature>
<feature type="transmembrane region" description="Helical; Name=6" evidence="3">
    <location>
        <begin position="254"/>
        <end position="274"/>
    </location>
</feature>
<feature type="topological domain" description="Extracellular" evidence="3">
    <location>
        <begin position="275"/>
        <end position="284"/>
    </location>
</feature>
<feature type="transmembrane region" description="Helical; Name=7" evidence="3">
    <location>
        <begin position="285"/>
        <end position="307"/>
    </location>
</feature>
<feature type="topological domain" description="Cytoplasmic" evidence="3">
    <location>
        <begin position="308"/>
        <end position="337"/>
    </location>
</feature>
<feature type="region of interest" description="Extracellular Loop 2 (ECL2)" evidence="1">
    <location>
        <begin position="176"/>
        <end position="189"/>
    </location>
</feature>
<feature type="glycosylation site" description="N-linked (GlcNAc...) asparagine" evidence="3">
    <location>
        <position position="21"/>
    </location>
</feature>
<feature type="disulfide bond" evidence="2">
    <location>
        <begin position="24"/>
        <end position="188"/>
    </location>
</feature>
<feature type="disulfide bond" evidence="4">
    <location>
        <begin position="99"/>
        <end position="192"/>
    </location>
</feature>
<feature type="sequence variant" id="VAR_055923" description="In dbSNP:rs34746740.">
    <original>T</original>
    <variation>M</variation>
    <location>
        <position position="272"/>
    </location>
</feature>
<feature type="sequence variant" id="VAR_055924" description="In dbSNP:rs35839363.">
    <original>R</original>
    <variation>C</variation>
    <location>
        <position position="330"/>
    </location>
</feature>
<feature type="sequence conflict" description="In Ref. 6; AAH95541." evidence="10" ref="6">
    <original>F</original>
    <variation>L</variation>
    <location>
        <position position="16"/>
    </location>
</feature>
<feature type="sequence conflict" description="In Ref. 1; AAC39581." evidence="10" ref="1">
    <original>A</original>
    <variation>T</variation>
    <location>
        <position position="40"/>
    </location>
</feature>
<feature type="sequence conflict" description="In Ref. 6; AAH69171." evidence="10" ref="6">
    <original>D</original>
    <variation>N</variation>
    <location>
        <position position="80"/>
    </location>
</feature>
<feature type="sequence conflict" description="In Ref. 1; AAC39581." evidence="10" ref="1">
    <original>A</original>
    <variation>V</variation>
    <location>
        <position position="257"/>
    </location>
</feature>
<feature type="sequence conflict" description="In Ref. 6; AAH95541." evidence="10" ref="6">
    <original>V</original>
    <variation>A</variation>
    <location>
        <position position="332"/>
    </location>
</feature>
<proteinExistence type="evidence at transcript level"/>
<dbReference type="EMBL" id="AF021818">
    <property type="protein sequence ID" value="AAC39581.1"/>
    <property type="molecule type" value="mRNA"/>
</dbReference>
<dbReference type="EMBL" id="AY702306">
    <property type="protein sequence ID" value="AAV70123.1"/>
    <property type="molecule type" value="Genomic_DNA"/>
</dbReference>
<dbReference type="EMBL" id="FJ372547">
    <property type="protein sequence ID" value="ACP18682.1"/>
    <property type="molecule type" value="Genomic_DNA"/>
</dbReference>
<dbReference type="EMBL" id="AL513524">
    <property type="status" value="NOT_ANNOTATED_CDS"/>
    <property type="molecule type" value="Genomic_DNA"/>
</dbReference>
<dbReference type="EMBL" id="CH471051">
    <property type="protein sequence ID" value="EAW48025.1"/>
    <property type="molecule type" value="Genomic_DNA"/>
</dbReference>
<dbReference type="EMBL" id="BC069171">
    <property type="protein sequence ID" value="AAH69171.1"/>
    <property type="molecule type" value="mRNA"/>
</dbReference>
<dbReference type="EMBL" id="BC095541">
    <property type="protein sequence ID" value="AAH95541.1"/>
    <property type="molecule type" value="mRNA"/>
</dbReference>
<dbReference type="EMBL" id="BC112209">
    <property type="protein sequence ID" value="AAI12210.1"/>
    <property type="molecule type" value="mRNA"/>
</dbReference>
<dbReference type="EMBL" id="BC112211">
    <property type="protein sequence ID" value="AAI12212.1"/>
    <property type="molecule type" value="mRNA"/>
</dbReference>
<dbReference type="CCDS" id="CCDS5156.1"/>
<dbReference type="PIR" id="JC5832">
    <property type="entry name" value="JC5832"/>
</dbReference>
<dbReference type="RefSeq" id="NP_001376456.1">
    <property type="nucleotide sequence ID" value="NM_001389527.1"/>
</dbReference>
<dbReference type="RefSeq" id="NP_003958.2">
    <property type="nucleotide sequence ID" value="NM_003967.3"/>
</dbReference>
<dbReference type="SMR" id="O14804"/>
<dbReference type="FunCoup" id="O14804">
    <property type="interactions" value="557"/>
</dbReference>
<dbReference type="STRING" id="9606.ENSP00000258034"/>
<dbReference type="ChEMBL" id="CHEMBL3714046"/>
<dbReference type="GlyCosmos" id="O14804">
    <property type="glycosylation" value="1 site, No reported glycans"/>
</dbReference>
<dbReference type="GlyGen" id="O14804">
    <property type="glycosylation" value="1 site"/>
</dbReference>
<dbReference type="iPTMnet" id="O14804"/>
<dbReference type="PhosphoSitePlus" id="O14804"/>
<dbReference type="BioMuta" id="TAAR5"/>
<dbReference type="PaxDb" id="9606-ENSP00000258034"/>
<dbReference type="Antibodypedia" id="19709">
    <property type="antibodies" value="211 antibodies from 29 providers"/>
</dbReference>
<dbReference type="DNASU" id="9038"/>
<dbReference type="Ensembl" id="ENST00000258034.4">
    <property type="protein sequence ID" value="ENSP00000258034.2"/>
    <property type="gene ID" value="ENSG00000135569.5"/>
</dbReference>
<dbReference type="GeneID" id="9038"/>
<dbReference type="KEGG" id="hsa:9038"/>
<dbReference type="MANE-Select" id="ENST00000258034.4">
    <property type="protein sequence ID" value="ENSP00000258034.2"/>
    <property type="RefSeq nucleotide sequence ID" value="NM_003967.3"/>
    <property type="RefSeq protein sequence ID" value="NP_003958.2"/>
</dbReference>
<dbReference type="UCSC" id="uc003qdk.3">
    <property type="organism name" value="human"/>
</dbReference>
<dbReference type="AGR" id="HGNC:30236"/>
<dbReference type="CTD" id="9038"/>
<dbReference type="DisGeNET" id="9038"/>
<dbReference type="GeneCards" id="TAAR5"/>
<dbReference type="HGNC" id="HGNC:30236">
    <property type="gene designation" value="TAAR5"/>
</dbReference>
<dbReference type="HPA" id="ENSG00000135569">
    <property type="expression patterns" value="Not detected"/>
</dbReference>
<dbReference type="MIM" id="607405">
    <property type="type" value="gene"/>
</dbReference>
<dbReference type="neXtProt" id="NX_O14804"/>
<dbReference type="OpenTargets" id="ENSG00000135569"/>
<dbReference type="PharmGKB" id="PA142670843"/>
<dbReference type="VEuPathDB" id="HostDB:ENSG00000135569"/>
<dbReference type="eggNOG" id="KOG3656">
    <property type="taxonomic scope" value="Eukaryota"/>
</dbReference>
<dbReference type="GeneTree" id="ENSGT00940000161258"/>
<dbReference type="HOGENOM" id="CLU_009579_11_0_1"/>
<dbReference type="InParanoid" id="O14804"/>
<dbReference type="OMA" id="PTIDLYQ"/>
<dbReference type="OrthoDB" id="5959645at2759"/>
<dbReference type="PAN-GO" id="O14804">
    <property type="GO annotations" value="1 GO annotation based on evolutionary models"/>
</dbReference>
<dbReference type="PhylomeDB" id="O14804"/>
<dbReference type="TreeFam" id="TF343107"/>
<dbReference type="PathwayCommons" id="O14804"/>
<dbReference type="Reactome" id="R-HSA-375280">
    <property type="pathway name" value="Amine ligand-binding receptors"/>
</dbReference>
<dbReference type="Reactome" id="R-HSA-418555">
    <property type="pathway name" value="G alpha (s) signalling events"/>
</dbReference>
<dbReference type="BioGRID-ORCS" id="9038">
    <property type="hits" value="6 hits in 1129 CRISPR screens"/>
</dbReference>
<dbReference type="GeneWiki" id="TAAR5"/>
<dbReference type="GenomeRNAi" id="9038"/>
<dbReference type="Pharos" id="O14804">
    <property type="development level" value="Tchem"/>
</dbReference>
<dbReference type="PRO" id="PR:O14804"/>
<dbReference type="Proteomes" id="UP000005640">
    <property type="component" value="Chromosome 6"/>
</dbReference>
<dbReference type="RNAct" id="O14804">
    <property type="molecule type" value="protein"/>
</dbReference>
<dbReference type="Bgee" id="ENSG00000135569">
    <property type="expression patterns" value="Expressed in male germ line stem cell (sensu Vertebrata) in testis"/>
</dbReference>
<dbReference type="GO" id="GO:0005886">
    <property type="term" value="C:plasma membrane"/>
    <property type="evidence" value="ECO:0000314"/>
    <property type="project" value="UniProtKB"/>
</dbReference>
<dbReference type="GO" id="GO:0004930">
    <property type="term" value="F:G protein-coupled receptor activity"/>
    <property type="evidence" value="ECO:0000304"/>
    <property type="project" value="GDB"/>
</dbReference>
<dbReference type="GO" id="GO:0001594">
    <property type="term" value="F:trace-amine receptor activity"/>
    <property type="evidence" value="ECO:0000318"/>
    <property type="project" value="GO_Central"/>
</dbReference>
<dbReference type="GO" id="GO:1990081">
    <property type="term" value="F:trimethylamine receptor activity"/>
    <property type="evidence" value="ECO:0000314"/>
    <property type="project" value="UniProtKB"/>
</dbReference>
<dbReference type="GO" id="GO:0007189">
    <property type="term" value="P:adenylate cyclase-activating G protein-coupled receptor signaling pathway"/>
    <property type="evidence" value="ECO:0000314"/>
    <property type="project" value="UniProt"/>
</dbReference>
<dbReference type="GO" id="GO:0050890">
    <property type="term" value="P:cognition"/>
    <property type="evidence" value="ECO:0000250"/>
    <property type="project" value="UniProtKB"/>
</dbReference>
<dbReference type="GO" id="GO:0007186">
    <property type="term" value="P:G protein-coupled receptor signaling pathway"/>
    <property type="evidence" value="ECO:0000318"/>
    <property type="project" value="GO_Central"/>
</dbReference>
<dbReference type="GO" id="GO:0007608">
    <property type="term" value="P:sensory perception of smell"/>
    <property type="evidence" value="ECO:0000250"/>
    <property type="project" value="UniProt"/>
</dbReference>
<dbReference type="GO" id="GO:0007165">
    <property type="term" value="P:signal transduction"/>
    <property type="evidence" value="ECO:0000304"/>
    <property type="project" value="ProtInc"/>
</dbReference>
<dbReference type="CDD" id="cd15318">
    <property type="entry name" value="7tmA_TAAR5"/>
    <property type="match status" value="1"/>
</dbReference>
<dbReference type="FunFam" id="1.20.1070.10:FF:000030">
    <property type="entry name" value="trace amine-associated receptor 1"/>
    <property type="match status" value="1"/>
</dbReference>
<dbReference type="Gene3D" id="1.20.1070.10">
    <property type="entry name" value="Rhodopsin 7-helix transmembrane proteins"/>
    <property type="match status" value="1"/>
</dbReference>
<dbReference type="InterPro" id="IPR000276">
    <property type="entry name" value="GPCR_Rhodpsn"/>
</dbReference>
<dbReference type="InterPro" id="IPR017452">
    <property type="entry name" value="GPCR_Rhodpsn_7TM"/>
</dbReference>
<dbReference type="InterPro" id="IPR050569">
    <property type="entry name" value="TAAR"/>
</dbReference>
<dbReference type="InterPro" id="IPR009132">
    <property type="entry name" value="TAAR_fam"/>
</dbReference>
<dbReference type="PANTHER" id="PTHR24249">
    <property type="entry name" value="HISTAMINE RECEPTOR-RELATED G-PROTEIN COUPLED RECEPTOR"/>
    <property type="match status" value="1"/>
</dbReference>
<dbReference type="PANTHER" id="PTHR24249:SF307">
    <property type="entry name" value="TRACE AMINE-ASSOCIATED RECEPTOR 5"/>
    <property type="match status" value="1"/>
</dbReference>
<dbReference type="Pfam" id="PF00001">
    <property type="entry name" value="7tm_1"/>
    <property type="match status" value="1"/>
</dbReference>
<dbReference type="PRINTS" id="PR00237">
    <property type="entry name" value="GPCRRHODOPSN"/>
</dbReference>
<dbReference type="PRINTS" id="PR01830">
    <property type="entry name" value="TRACEAMINER"/>
</dbReference>
<dbReference type="SMART" id="SM01381">
    <property type="entry name" value="7TM_GPCR_Srsx"/>
    <property type="match status" value="1"/>
</dbReference>
<dbReference type="SUPFAM" id="SSF81321">
    <property type="entry name" value="Family A G protein-coupled receptor-like"/>
    <property type="match status" value="1"/>
</dbReference>
<dbReference type="PROSITE" id="PS00237">
    <property type="entry name" value="G_PROTEIN_RECEP_F1_1"/>
    <property type="match status" value="1"/>
</dbReference>
<dbReference type="PROSITE" id="PS50262">
    <property type="entry name" value="G_PROTEIN_RECEP_F1_2"/>
    <property type="match status" value="1"/>
</dbReference>
<protein>
    <recommendedName>
        <fullName evidence="8">Trace amine-associated receptor 5</fullName>
        <shortName>TaR-5</shortName>
        <shortName evidence="8">Trace amine receptor 5</shortName>
        <shortName evidence="8">hTaar5</shortName>
    </recommendedName>
    <alternativeName>
        <fullName evidence="9">Putative neurotransmitter receptor</fullName>
    </alternativeName>
</protein>
<comment type="function">
    <text evidence="5">Olfactory receptor specific for trimethylamine, a trace amine (PubMed:23393561). Also activated at lower level by dimethylethylamine (PubMed:23393561). Trimethylamine is a bacterial metabolite found in some animal odors, and to humans it is a repulsive odor associated with bad breath and spoiled food (PubMed:23393561). Trimethylamine-binding causes a conformation change that triggers signaling via G(s)-class of G alpha proteins (GNAL or GNAS) (PubMed:23393561).</text>
</comment>
<comment type="subcellular location">
    <subcellularLocation>
        <location evidence="5 6">Cell membrane</location>
        <topology evidence="5">Multi-pass membrane protein</topology>
    </subcellularLocation>
</comment>
<comment type="tissue specificity">
    <text evidence="7">Expressed almost exclusively in skeletal muscle and selected areas of the brain, such amygdala, hippocampus, caudate nucleus, thalamus and hypothalamus (PubMed:9464258). Weak expression is also find in substantia nigra (PubMed:9464258).</text>
</comment>
<comment type="domain">
    <text evidence="1">In addition to the well known disulfide bond common to G-protein coupled receptor 1 family, trace amine-associated receptors (TAARs) contain an unique disulfide bond (Cys-24-Cys-188) connecting the N-terminus to the extracellular Loop 2 (ECL2), which is required for agonist-induced receptor activation.</text>
</comment>
<comment type="miscellaneous">
    <text evidence="11">Polymorphic variants of this gene are not associated with specific anosmia for trimethylamine.</text>
</comment>
<comment type="similarity">
    <text evidence="4">Belongs to the G-protein coupled receptor 1 family.</text>
</comment>
<evidence type="ECO:0000250" key="1">
    <source>
        <dbReference type="UniProtKB" id="Q5QD04"/>
    </source>
</evidence>
<evidence type="ECO:0000250" key="2">
    <source>
        <dbReference type="UniProtKB" id="Q5QD14"/>
    </source>
</evidence>
<evidence type="ECO:0000255" key="3"/>
<evidence type="ECO:0000255" key="4">
    <source>
        <dbReference type="PROSITE-ProRule" id="PRU00521"/>
    </source>
</evidence>
<evidence type="ECO:0000269" key="5">
    <source>
    </source>
</evidence>
<evidence type="ECO:0000269" key="6">
    <source>
    </source>
</evidence>
<evidence type="ECO:0000269" key="7">
    <source>
    </source>
</evidence>
<evidence type="ECO:0000303" key="8">
    <source>
    </source>
</evidence>
<evidence type="ECO:0000303" key="9">
    <source>
    </source>
</evidence>
<evidence type="ECO:0000305" key="10"/>
<evidence type="ECO:0000305" key="11">
    <source>
    </source>
</evidence>
<evidence type="ECO:0000312" key="12">
    <source>
        <dbReference type="HGNC" id="HGNC:30236"/>
    </source>
</evidence>
<name>TAAR5_HUMAN</name>
<gene>
    <name evidence="8 12" type="primary">TAAR5</name>
    <name evidence="9" type="synonym">PNR</name>
</gene>
<organism>
    <name type="scientific">Homo sapiens</name>
    <name type="common">Human</name>
    <dbReference type="NCBI Taxonomy" id="9606"/>
    <lineage>
        <taxon>Eukaryota</taxon>
        <taxon>Metazoa</taxon>
        <taxon>Chordata</taxon>
        <taxon>Craniata</taxon>
        <taxon>Vertebrata</taxon>
        <taxon>Euteleostomi</taxon>
        <taxon>Mammalia</taxon>
        <taxon>Eutheria</taxon>
        <taxon>Euarchontoglires</taxon>
        <taxon>Primates</taxon>
        <taxon>Haplorrhini</taxon>
        <taxon>Catarrhini</taxon>
        <taxon>Hominidae</taxon>
        <taxon>Homo</taxon>
    </lineage>
</organism>
<accession>O14804</accession>
<accession>D8KZS1</accession>
<accession>Q2M1V1</accession>
<accession>Q4VBL1</accession>
<accession>Q5VUQ3</accession>
<accession>Q6NTA8</accession>
<keyword id="KW-1003">Cell membrane</keyword>
<keyword id="KW-1015">Disulfide bond</keyword>
<keyword id="KW-0297">G-protein coupled receptor</keyword>
<keyword id="KW-0325">Glycoprotein</keyword>
<keyword id="KW-0472">Membrane</keyword>
<keyword id="KW-0675">Receptor</keyword>
<keyword id="KW-1185">Reference proteome</keyword>
<keyword id="KW-0807">Transducer</keyword>
<keyword id="KW-0812">Transmembrane</keyword>
<keyword id="KW-1133">Transmembrane helix</keyword>
<sequence length="337" mass="38242">MRAVFIQGAEEHPAAFCYQVNGSCPRTVHTLGIQLVIYLACAAGMLIIVLGNVFVAFAVSYFKALHTPTNFLLLSLALADMFLGLLVLPLSTIRSVESCWFFGDFLCRLHTYLDTLFCLTSIFHLCFISIDRHCAICDPLLYPSKFTVRVALRYILAGWGVPAAYTSLFLYTDVVETRLSQWLEEMPCVGSCQLLLNKFWGWLNFPLFFVPCLIMISLYVKIFVVATRQAQQITTLSKSLAGAAKHERKAAKTLGIAVGIYLLCWLPFTIDTMVDSLLHFITPPLVFDIFIWFAYFNSACNPIIYVFSYQWFRKALKLTLSQKVFSPQTRTVDLYQE</sequence>